<gene>
    <name type="primary">Araf</name>
    <name type="synonym">A-raf</name>
    <name type="synonym">Araf1</name>
</gene>
<evidence type="ECO:0000250" key="1"/>
<evidence type="ECO:0000250" key="2">
    <source>
        <dbReference type="UniProtKB" id="P10398"/>
    </source>
</evidence>
<evidence type="ECO:0000255" key="3">
    <source>
        <dbReference type="PROSITE-ProRule" id="PRU00159"/>
    </source>
</evidence>
<evidence type="ECO:0000255" key="4">
    <source>
        <dbReference type="PROSITE-ProRule" id="PRU00226"/>
    </source>
</evidence>
<evidence type="ECO:0000255" key="5">
    <source>
        <dbReference type="PROSITE-ProRule" id="PRU00262"/>
    </source>
</evidence>
<evidence type="ECO:0000255" key="6">
    <source>
        <dbReference type="PROSITE-ProRule" id="PRU10027"/>
    </source>
</evidence>
<evidence type="ECO:0000256" key="7">
    <source>
        <dbReference type="SAM" id="MobiDB-lite"/>
    </source>
</evidence>
<evidence type="ECO:0000305" key="8"/>
<evidence type="ECO:0007744" key="9">
    <source>
    </source>
</evidence>
<dbReference type="EC" id="2.7.11.1"/>
<dbReference type="EMBL" id="X06942">
    <property type="protein sequence ID" value="CAA30023.1"/>
    <property type="molecule type" value="mRNA"/>
</dbReference>
<dbReference type="PIR" id="S00726">
    <property type="entry name" value="S00726"/>
</dbReference>
<dbReference type="RefSeq" id="NP_071977.1">
    <property type="nucleotide sequence ID" value="NM_022532.2"/>
</dbReference>
<dbReference type="BMRB" id="P14056"/>
<dbReference type="SMR" id="P14056"/>
<dbReference type="BioGRID" id="249047">
    <property type="interactions" value="3"/>
</dbReference>
<dbReference type="FunCoup" id="P14056">
    <property type="interactions" value="3356"/>
</dbReference>
<dbReference type="STRING" id="10116.ENSRNOP00000048890"/>
<dbReference type="iPTMnet" id="P14056"/>
<dbReference type="PhosphoSitePlus" id="P14056"/>
<dbReference type="jPOST" id="P14056"/>
<dbReference type="PaxDb" id="10116-ENSRNOP00000048890"/>
<dbReference type="Ensembl" id="ENSRNOT00000039911.4">
    <property type="protein sequence ID" value="ENSRNOP00000048890.5"/>
    <property type="gene ID" value="ENSRNOG00000010838.6"/>
</dbReference>
<dbReference type="GeneID" id="64363"/>
<dbReference type="KEGG" id="rno:64363"/>
<dbReference type="UCSC" id="RGD:2148">
    <property type="organism name" value="rat"/>
</dbReference>
<dbReference type="AGR" id="RGD:2148"/>
<dbReference type="CTD" id="369"/>
<dbReference type="RGD" id="2148">
    <property type="gene designation" value="Araf"/>
</dbReference>
<dbReference type="eggNOG" id="KOG0193">
    <property type="taxonomic scope" value="Eukaryota"/>
</dbReference>
<dbReference type="GeneTree" id="ENSGT00940000159633"/>
<dbReference type="HOGENOM" id="CLU_023684_1_1_1"/>
<dbReference type="InParanoid" id="P14056"/>
<dbReference type="OMA" id="EMCVVYI"/>
<dbReference type="PhylomeDB" id="P14056"/>
<dbReference type="TreeFam" id="TF317006"/>
<dbReference type="BRENDA" id="2.7.10.2">
    <property type="organism ID" value="5301"/>
</dbReference>
<dbReference type="Reactome" id="R-RNO-5673000">
    <property type="pathway name" value="RAF activation"/>
</dbReference>
<dbReference type="Reactome" id="R-RNO-5674135">
    <property type="pathway name" value="MAP2K and MAPK activation"/>
</dbReference>
<dbReference type="Reactome" id="R-RNO-5675221">
    <property type="pathway name" value="Negative regulation of MAPK pathway"/>
</dbReference>
<dbReference type="PRO" id="PR:P14056"/>
<dbReference type="Proteomes" id="UP000002494">
    <property type="component" value="Chromosome X"/>
</dbReference>
<dbReference type="Bgee" id="ENSRNOG00000010838">
    <property type="expression patterns" value="Expressed in heart and 18 other cell types or tissues"/>
</dbReference>
<dbReference type="GO" id="GO:0005737">
    <property type="term" value="C:cytoplasm"/>
    <property type="evidence" value="ECO:0000318"/>
    <property type="project" value="GO_Central"/>
</dbReference>
<dbReference type="GO" id="GO:0005829">
    <property type="term" value="C:cytosol"/>
    <property type="evidence" value="ECO:0000318"/>
    <property type="project" value="GO_Central"/>
</dbReference>
<dbReference type="GO" id="GO:0005739">
    <property type="term" value="C:mitochondrion"/>
    <property type="evidence" value="ECO:0000266"/>
    <property type="project" value="RGD"/>
</dbReference>
<dbReference type="GO" id="GO:0005524">
    <property type="term" value="F:ATP binding"/>
    <property type="evidence" value="ECO:0007669"/>
    <property type="project" value="UniProtKB-KW"/>
</dbReference>
<dbReference type="GO" id="GO:0004709">
    <property type="term" value="F:MAP kinase kinase kinase activity"/>
    <property type="evidence" value="ECO:0000314"/>
    <property type="project" value="RGD"/>
</dbReference>
<dbReference type="GO" id="GO:0106310">
    <property type="term" value="F:protein serine kinase activity"/>
    <property type="evidence" value="ECO:0007669"/>
    <property type="project" value="RHEA"/>
</dbReference>
<dbReference type="GO" id="GO:0004674">
    <property type="term" value="F:protein serine/threonine kinase activity"/>
    <property type="evidence" value="ECO:0000266"/>
    <property type="project" value="RGD"/>
</dbReference>
<dbReference type="GO" id="GO:0008270">
    <property type="term" value="F:zinc ion binding"/>
    <property type="evidence" value="ECO:0007669"/>
    <property type="project" value="UniProtKB-KW"/>
</dbReference>
<dbReference type="GO" id="GO:0035556">
    <property type="term" value="P:intracellular signal transduction"/>
    <property type="evidence" value="ECO:0000304"/>
    <property type="project" value="RGD"/>
</dbReference>
<dbReference type="GO" id="GO:0000165">
    <property type="term" value="P:MAPK cascade"/>
    <property type="evidence" value="ECO:0000318"/>
    <property type="project" value="GO_Central"/>
</dbReference>
<dbReference type="GO" id="GO:0043066">
    <property type="term" value="P:negative regulation of apoptotic process"/>
    <property type="evidence" value="ECO:0000266"/>
    <property type="project" value="RGD"/>
</dbReference>
<dbReference type="GO" id="GO:0032434">
    <property type="term" value="P:regulation of proteasomal ubiquitin-dependent protein catabolic process"/>
    <property type="evidence" value="ECO:0000250"/>
    <property type="project" value="UniProtKB"/>
</dbReference>
<dbReference type="GO" id="GO:0032006">
    <property type="term" value="P:regulation of TOR signaling"/>
    <property type="evidence" value="ECO:0000250"/>
    <property type="project" value="UniProtKB"/>
</dbReference>
<dbReference type="CDD" id="cd20870">
    <property type="entry name" value="C1_A_C-Raf"/>
    <property type="match status" value="1"/>
</dbReference>
<dbReference type="CDD" id="cd17133">
    <property type="entry name" value="RBD_ARAF"/>
    <property type="match status" value="1"/>
</dbReference>
<dbReference type="FunFam" id="3.10.20.90:FF:000015">
    <property type="entry name" value="B-Raf proto-oncogene serine/threonine-protein kinase"/>
    <property type="match status" value="1"/>
</dbReference>
<dbReference type="FunFam" id="3.30.200.20:FF:000024">
    <property type="entry name" value="B-Raf proto-oncogene serine/threonine-protein kinase"/>
    <property type="match status" value="1"/>
</dbReference>
<dbReference type="FunFam" id="3.30.60.20:FF:000004">
    <property type="entry name" value="B-Raf proto-oncogene serine/threonine-protein kinase"/>
    <property type="match status" value="1"/>
</dbReference>
<dbReference type="FunFam" id="1.10.510.10:FF:000036">
    <property type="entry name" value="RAF proto-oncogene serine/threonine-protein kinase"/>
    <property type="match status" value="1"/>
</dbReference>
<dbReference type="Gene3D" id="3.30.60.20">
    <property type="match status" value="1"/>
</dbReference>
<dbReference type="Gene3D" id="3.10.20.90">
    <property type="entry name" value="Phosphatidylinositol 3-kinase Catalytic Subunit, Chain A, domain 1"/>
    <property type="match status" value="1"/>
</dbReference>
<dbReference type="Gene3D" id="3.30.200.20">
    <property type="entry name" value="Phosphorylase Kinase, domain 1"/>
    <property type="match status" value="1"/>
</dbReference>
<dbReference type="Gene3D" id="1.10.510.10">
    <property type="entry name" value="Transferase(Phosphotransferase) domain 1"/>
    <property type="match status" value="1"/>
</dbReference>
<dbReference type="InterPro" id="IPR046349">
    <property type="entry name" value="C1-like_sf"/>
</dbReference>
<dbReference type="InterPro" id="IPR020454">
    <property type="entry name" value="DAG/PE-bd"/>
</dbReference>
<dbReference type="InterPro" id="IPR011009">
    <property type="entry name" value="Kinase-like_dom_sf"/>
</dbReference>
<dbReference type="InterPro" id="IPR002219">
    <property type="entry name" value="PE/DAG-bd"/>
</dbReference>
<dbReference type="InterPro" id="IPR000719">
    <property type="entry name" value="Prot_kinase_dom"/>
</dbReference>
<dbReference type="InterPro" id="IPR017441">
    <property type="entry name" value="Protein_kinase_ATP_BS"/>
</dbReference>
<dbReference type="InterPro" id="IPR003116">
    <property type="entry name" value="RBD_dom"/>
</dbReference>
<dbReference type="InterPro" id="IPR001245">
    <property type="entry name" value="Ser-Thr/Tyr_kinase_cat_dom"/>
</dbReference>
<dbReference type="InterPro" id="IPR008271">
    <property type="entry name" value="Ser/Thr_kinase_AS"/>
</dbReference>
<dbReference type="InterPro" id="IPR051681">
    <property type="entry name" value="Ser/Thr_Kinases-Pseudokinases"/>
</dbReference>
<dbReference type="InterPro" id="IPR029071">
    <property type="entry name" value="Ubiquitin-like_domsf"/>
</dbReference>
<dbReference type="PANTHER" id="PTHR44329">
    <property type="entry name" value="SERINE/THREONINE-PROTEIN KINASE TNNI3K-RELATED"/>
    <property type="match status" value="1"/>
</dbReference>
<dbReference type="PANTHER" id="PTHR44329:SF55">
    <property type="entry name" value="SERINE_THREONINE-PROTEIN KINASE A-RAF"/>
    <property type="match status" value="1"/>
</dbReference>
<dbReference type="Pfam" id="PF00130">
    <property type="entry name" value="C1_1"/>
    <property type="match status" value="1"/>
</dbReference>
<dbReference type="Pfam" id="PF07714">
    <property type="entry name" value="PK_Tyr_Ser-Thr"/>
    <property type="match status" value="1"/>
</dbReference>
<dbReference type="Pfam" id="PF02196">
    <property type="entry name" value="RBD"/>
    <property type="match status" value="1"/>
</dbReference>
<dbReference type="PRINTS" id="PR00008">
    <property type="entry name" value="DAGPEDOMAIN"/>
</dbReference>
<dbReference type="SMART" id="SM00109">
    <property type="entry name" value="C1"/>
    <property type="match status" value="1"/>
</dbReference>
<dbReference type="SMART" id="SM00455">
    <property type="entry name" value="RBD"/>
    <property type="match status" value="1"/>
</dbReference>
<dbReference type="SMART" id="SM00220">
    <property type="entry name" value="S_TKc"/>
    <property type="match status" value="1"/>
</dbReference>
<dbReference type="SUPFAM" id="SSF57889">
    <property type="entry name" value="Cysteine-rich domain"/>
    <property type="match status" value="1"/>
</dbReference>
<dbReference type="SUPFAM" id="SSF56112">
    <property type="entry name" value="Protein kinase-like (PK-like)"/>
    <property type="match status" value="1"/>
</dbReference>
<dbReference type="SUPFAM" id="SSF54236">
    <property type="entry name" value="Ubiquitin-like"/>
    <property type="match status" value="1"/>
</dbReference>
<dbReference type="PROSITE" id="PS00107">
    <property type="entry name" value="PROTEIN_KINASE_ATP"/>
    <property type="match status" value="1"/>
</dbReference>
<dbReference type="PROSITE" id="PS50011">
    <property type="entry name" value="PROTEIN_KINASE_DOM"/>
    <property type="match status" value="1"/>
</dbReference>
<dbReference type="PROSITE" id="PS00108">
    <property type="entry name" value="PROTEIN_KINASE_ST"/>
    <property type="match status" value="1"/>
</dbReference>
<dbReference type="PROSITE" id="PS50898">
    <property type="entry name" value="RBD"/>
    <property type="match status" value="1"/>
</dbReference>
<dbReference type="PROSITE" id="PS00479">
    <property type="entry name" value="ZF_DAG_PE_1"/>
    <property type="match status" value="1"/>
</dbReference>
<dbReference type="PROSITE" id="PS50081">
    <property type="entry name" value="ZF_DAG_PE_2"/>
    <property type="match status" value="1"/>
</dbReference>
<accession>P14056</accession>
<reference key="1">
    <citation type="journal article" date="1987" name="Oncogene Res.">
        <title>The complete primary structure of the rat A-raf cDNA coding region: conservation of the putative regulatory regions present in rat c-raf.</title>
        <authorList>
            <person name="Ishikawa F."/>
            <person name="Takaku F."/>
            <person name="Nagao M."/>
            <person name="Sugimura T."/>
        </authorList>
    </citation>
    <scope>NUCLEOTIDE SEQUENCE [MRNA]</scope>
    <source>
        <strain>Fischer</strain>
        <tissue>Liver</tissue>
    </source>
</reference>
<reference key="2">
    <citation type="journal article" date="2012" name="Nat. Commun.">
        <title>Quantitative maps of protein phosphorylation sites across 14 different rat organs and tissues.</title>
        <authorList>
            <person name="Lundby A."/>
            <person name="Secher A."/>
            <person name="Lage K."/>
            <person name="Nordsborg N.B."/>
            <person name="Dmytriyev A."/>
            <person name="Lundby C."/>
            <person name="Olsen J.V."/>
        </authorList>
    </citation>
    <scope>PHOSPHORYLATION [LARGE SCALE ANALYSIS] AT THR-181</scope>
    <scope>IDENTIFICATION BY MASS SPECTROMETRY [LARGE SCALE ANALYSIS]</scope>
</reference>
<sequence>MEPPRGPPASGAEPSRAVGTVKVYLPNKQRTVVTVRDGMSVYDSLDKALKVRGLNQDCCVVYRLIKGRKTVTAWDTAIAPLDGEELIVEVLEDVPLTMHNFVRKTFFSLAFCDFCLKFLFHGFRCQTCGYKFHQHCSSKVPTVCVDMSTNRRQFYHSIQDLSGGSRQQEVPSNLSVNELLTPQGPSPFTQQRDQEHFSFPAPANPPLQRIRSTSTPNVHMVSTTAPMDSSLMQFTAQSFSTDAAGRGGDGAPRGSPSPASVSSGRKSPHSKLPAEQRERKSLADEKKKVKNLGYRDSGYYWEVPPSEVQLLKRIGTGSFGTVFRGRWHGDVAVKVLKVAQPTAEQAQAFKNEMQVLRKTRHVNILLFMGFMTRPGFAIITQWCEGSSLYHHLHVADTRFDMVQLIDVARQTAQGMDYLHAKNIIHRDLKSNNIFLHEGLTVKIGDFGLATVKTRWSGAQPLEQPSGSVLWMAAEVIRMQDPNPYSFQSDVYAYGVVLYELMTGSLPYSHIGSRDQIIFMVGRGYLSPDLSKIFSNCPKAMRRLLTDCLKFQREERPLFPQILATIELLQRSLPKIERSASEPSLHRTQADELPACLLSAARLVP</sequence>
<keyword id="KW-0067">ATP-binding</keyword>
<keyword id="KW-0418">Kinase</keyword>
<keyword id="KW-0479">Metal-binding</keyword>
<keyword id="KW-0547">Nucleotide-binding</keyword>
<keyword id="KW-0597">Phosphoprotein</keyword>
<keyword id="KW-0656">Proto-oncogene</keyword>
<keyword id="KW-1185">Reference proteome</keyword>
<keyword id="KW-0723">Serine/threonine-protein kinase</keyword>
<keyword id="KW-0808">Transferase</keyword>
<keyword id="KW-0862">Zinc</keyword>
<keyword id="KW-0863">Zinc-finger</keyword>
<proteinExistence type="evidence at protein level"/>
<organism>
    <name type="scientific">Rattus norvegicus</name>
    <name type="common">Rat</name>
    <dbReference type="NCBI Taxonomy" id="10116"/>
    <lineage>
        <taxon>Eukaryota</taxon>
        <taxon>Metazoa</taxon>
        <taxon>Chordata</taxon>
        <taxon>Craniata</taxon>
        <taxon>Vertebrata</taxon>
        <taxon>Euteleostomi</taxon>
        <taxon>Mammalia</taxon>
        <taxon>Eutheria</taxon>
        <taxon>Euarchontoglires</taxon>
        <taxon>Glires</taxon>
        <taxon>Rodentia</taxon>
        <taxon>Myomorpha</taxon>
        <taxon>Muroidea</taxon>
        <taxon>Muridae</taxon>
        <taxon>Murinae</taxon>
        <taxon>Rattus</taxon>
    </lineage>
</organism>
<name>ARAF_RAT</name>
<comment type="function">
    <text evidence="2">Involved in the transduction of mitogenic signals from the cell membrane to the nucleus. May also regulate the TOR signaling cascade (By similarity). Phosphorylates PFKFB2 (By similarity).</text>
</comment>
<comment type="catalytic activity">
    <reaction>
        <text>L-seryl-[protein] + ATP = O-phospho-L-seryl-[protein] + ADP + H(+)</text>
        <dbReference type="Rhea" id="RHEA:17989"/>
        <dbReference type="Rhea" id="RHEA-COMP:9863"/>
        <dbReference type="Rhea" id="RHEA-COMP:11604"/>
        <dbReference type="ChEBI" id="CHEBI:15378"/>
        <dbReference type="ChEBI" id="CHEBI:29999"/>
        <dbReference type="ChEBI" id="CHEBI:30616"/>
        <dbReference type="ChEBI" id="CHEBI:83421"/>
        <dbReference type="ChEBI" id="CHEBI:456216"/>
        <dbReference type="EC" id="2.7.11.1"/>
    </reaction>
</comment>
<comment type="catalytic activity">
    <reaction>
        <text>L-threonyl-[protein] + ATP = O-phospho-L-threonyl-[protein] + ADP + H(+)</text>
        <dbReference type="Rhea" id="RHEA:46608"/>
        <dbReference type="Rhea" id="RHEA-COMP:11060"/>
        <dbReference type="Rhea" id="RHEA-COMP:11605"/>
        <dbReference type="ChEBI" id="CHEBI:15378"/>
        <dbReference type="ChEBI" id="CHEBI:30013"/>
        <dbReference type="ChEBI" id="CHEBI:30616"/>
        <dbReference type="ChEBI" id="CHEBI:61977"/>
        <dbReference type="ChEBI" id="CHEBI:456216"/>
        <dbReference type="EC" id="2.7.11.1"/>
    </reaction>
</comment>
<comment type="cofactor">
    <cofactor evidence="1">
        <name>Zn(2+)</name>
        <dbReference type="ChEBI" id="CHEBI:29105"/>
    </cofactor>
    <text evidence="1">Binds 2 Zn(2+) ions per subunit.</text>
</comment>
<comment type="subunit">
    <text evidence="1">Interacts with TH1L/NELFD.</text>
</comment>
<comment type="PTM">
    <text evidence="2">Dephosphorylation by the SHOC2-MRAS-PP1c (SMP) complex consisting of SHOC2, GTP-bound M-Ras/MRAS and the catalytic subunit of protein phosphatase 1 (PPP1CA, PPP1CB or PPP1CC); this relieves inactivation and stimulates kinase activity.</text>
</comment>
<comment type="similarity">
    <text evidence="8">Belongs to the protein kinase superfamily. TKL Ser/Thr protein kinase family. RAF subfamily.</text>
</comment>
<protein>
    <recommendedName>
        <fullName>Serine/threonine-protein kinase A-Raf</fullName>
        <ecNumber>2.7.11.1</ecNumber>
    </recommendedName>
    <alternativeName>
        <fullName>Proto-oncogene A-Raf</fullName>
    </alternativeName>
    <alternativeName>
        <fullName>Proto-oncogene A-Raf-1</fullName>
    </alternativeName>
</protein>
<feature type="chain" id="PRO_0000085625" description="Serine/threonine-protein kinase A-Raf">
    <location>
        <begin position="1"/>
        <end position="604"/>
    </location>
</feature>
<feature type="domain" description="RBD" evidence="5">
    <location>
        <begin position="19"/>
        <end position="91"/>
    </location>
</feature>
<feature type="domain" description="Protein kinase" evidence="3">
    <location>
        <begin position="308"/>
        <end position="568"/>
    </location>
</feature>
<feature type="zinc finger region" description="Phorbol-ester/DAG-type" evidence="4">
    <location>
        <begin position="98"/>
        <end position="144"/>
    </location>
</feature>
<feature type="region of interest" description="Disordered" evidence="7">
    <location>
        <begin position="178"/>
        <end position="222"/>
    </location>
</feature>
<feature type="region of interest" description="Disordered" evidence="7">
    <location>
        <begin position="241"/>
        <end position="287"/>
    </location>
</feature>
<feature type="compositionally biased region" description="Polar residues" evidence="7">
    <location>
        <begin position="210"/>
        <end position="222"/>
    </location>
</feature>
<feature type="compositionally biased region" description="Low complexity" evidence="7">
    <location>
        <begin position="252"/>
        <end position="265"/>
    </location>
</feature>
<feature type="compositionally biased region" description="Basic and acidic residues" evidence="7">
    <location>
        <begin position="272"/>
        <end position="287"/>
    </location>
</feature>
<feature type="active site" description="Proton acceptor" evidence="3 6">
    <location>
        <position position="427"/>
    </location>
</feature>
<feature type="binding site" evidence="1">
    <location>
        <position position="99"/>
    </location>
    <ligand>
        <name>Zn(2+)</name>
        <dbReference type="ChEBI" id="CHEBI:29105"/>
        <label>1</label>
    </ligand>
</feature>
<feature type="binding site" evidence="1">
    <location>
        <position position="112"/>
    </location>
    <ligand>
        <name>Zn(2+)</name>
        <dbReference type="ChEBI" id="CHEBI:29105"/>
        <label>2</label>
    </ligand>
</feature>
<feature type="binding site" evidence="1">
    <location>
        <position position="115"/>
    </location>
    <ligand>
        <name>Zn(2+)</name>
        <dbReference type="ChEBI" id="CHEBI:29105"/>
        <label>2</label>
    </ligand>
</feature>
<feature type="binding site" evidence="1">
    <location>
        <position position="125"/>
    </location>
    <ligand>
        <name>Zn(2+)</name>
        <dbReference type="ChEBI" id="CHEBI:29105"/>
        <label>1</label>
    </ligand>
</feature>
<feature type="binding site" evidence="1">
    <location>
        <position position="128"/>
    </location>
    <ligand>
        <name>Zn(2+)</name>
        <dbReference type="ChEBI" id="CHEBI:29105"/>
        <label>1</label>
    </ligand>
</feature>
<feature type="binding site" evidence="1">
    <location>
        <position position="133"/>
    </location>
    <ligand>
        <name>Zn(2+)</name>
        <dbReference type="ChEBI" id="CHEBI:29105"/>
        <label>2</label>
    </ligand>
</feature>
<feature type="binding site" evidence="1">
    <location>
        <position position="136"/>
    </location>
    <ligand>
        <name>Zn(2+)</name>
        <dbReference type="ChEBI" id="CHEBI:29105"/>
        <label>2</label>
    </ligand>
</feature>
<feature type="binding site" evidence="1">
    <location>
        <position position="144"/>
    </location>
    <ligand>
        <name>Zn(2+)</name>
        <dbReference type="ChEBI" id="CHEBI:29105"/>
        <label>1</label>
    </ligand>
</feature>
<feature type="binding site" evidence="3">
    <location>
        <begin position="314"/>
        <end position="322"/>
    </location>
    <ligand>
        <name>ATP</name>
        <dbReference type="ChEBI" id="CHEBI:30616"/>
    </ligand>
</feature>
<feature type="binding site" evidence="3">
    <location>
        <position position="334"/>
    </location>
    <ligand>
        <name>ATP</name>
        <dbReference type="ChEBI" id="CHEBI:30616"/>
    </ligand>
</feature>
<feature type="modified residue" description="Phosphoserine" evidence="2">
    <location>
        <position position="157"/>
    </location>
</feature>
<feature type="modified residue" description="Phosphoserine" evidence="2">
    <location>
        <position position="162"/>
    </location>
</feature>
<feature type="modified residue" description="Phosphothreonine" evidence="9">
    <location>
        <position position="181"/>
    </location>
</feature>
<feature type="modified residue" description="Phosphoserine" evidence="2">
    <location>
        <position position="186"/>
    </location>
</feature>
<feature type="modified residue" description="Phosphoserine" evidence="2">
    <location>
        <position position="255"/>
    </location>
</feature>
<feature type="modified residue" description="Phosphoserine" evidence="2">
    <location>
        <position position="267"/>
    </location>
</feature>
<feature type="modified residue" description="Phosphothreonine" evidence="2">
    <location>
        <position position="316"/>
    </location>
</feature>